<sequence length="29" mass="2947">GDLPVCGETCFGGTCNTPGCVCAWPVCTR</sequence>
<proteinExistence type="evidence at protein level"/>
<feature type="peptide" id="PRO_0000441794" description="Cyclotide psyleio C" evidence="2">
    <location>
        <begin position="1"/>
        <end position="29"/>
    </location>
</feature>
<feature type="disulfide bond" evidence="1">
    <location>
        <begin position="6"/>
        <end position="20"/>
    </location>
</feature>
<feature type="disulfide bond" evidence="1">
    <location>
        <begin position="10"/>
        <end position="22"/>
    </location>
</feature>
<feature type="disulfide bond" evidence="1">
    <location>
        <begin position="15"/>
        <end position="27"/>
    </location>
</feature>
<feature type="cross-link" description="Cyclopeptide (Gly-Arg)" evidence="5">
    <location>
        <begin position="1"/>
        <end position="29"/>
    </location>
</feature>
<feature type="unsure residue" description="L or I" evidence="3">
    <location>
        <position position="3"/>
    </location>
</feature>
<comment type="function">
    <text evidence="1">Probably participates in a plant defense mechanism.</text>
</comment>
<comment type="domain">
    <text evidence="4">The presence of a 'disulfide through disulfide knot' structurally defines this protein as a knottin.</text>
</comment>
<comment type="PTM">
    <text evidence="1 2">This is a cyclic peptide.</text>
</comment>
<comment type="mass spectrometry" mass="3287.21" method="MALDI" evidence="2"/>
<comment type="similarity">
    <text evidence="1">Belongs to the cyclotide family. Moebius subfamily.</text>
</comment>
<comment type="caution">
    <text evidence="1">This peptide is cyclic. The start position was chosen by similarity to Oak1 (kalata B1) for which the DNA sequence is known.</text>
</comment>
<protein>
    <recommendedName>
        <fullName evidence="3">Cyclotide psyleio C</fullName>
    </recommendedName>
</protein>
<evidence type="ECO:0000255" key="1">
    <source>
        <dbReference type="PROSITE-ProRule" id="PRU00395"/>
    </source>
</evidence>
<evidence type="ECO:0000269" key="2">
    <source>
    </source>
</evidence>
<evidence type="ECO:0000303" key="3">
    <source>
    </source>
</evidence>
<evidence type="ECO:0000305" key="4"/>
<evidence type="ECO:0000305" key="5">
    <source>
    </source>
</evidence>
<reference evidence="4" key="1">
    <citation type="journal article" date="2016" name="J. Nat. Prod.">
        <title>Isolation and Characterization of Cyclotides from Brazilian Psychotria: Significance in Plant Defense and Co-occurrence with Antioxidant Alkaloids.</title>
        <authorList>
            <person name="Matsuura H.N."/>
            <person name="Poth A.G."/>
            <person name="Yendo A.C."/>
            <person name="Fett-Neto A.G."/>
            <person name="Craik D.J."/>
        </authorList>
    </citation>
    <scope>PROTEIN SEQUENCE</scope>
    <scope>MASS SPECTROMETRY</scope>
    <scope>IDENTIFICATION BY MASS SPECTROMETRY</scope>
    <scope>CYCLIZATION</scope>
    <source>
        <tissue evidence="3">Leaf</tissue>
    </source>
</reference>
<keyword id="KW-0903">Direct protein sequencing</keyword>
<keyword id="KW-1015">Disulfide bond</keyword>
<keyword id="KW-0960">Knottin</keyword>
<keyword id="KW-0611">Plant defense</keyword>
<name>CYPLC_PSYLE</name>
<organism>
    <name type="scientific">Psychotria leiocarpa</name>
    <dbReference type="NCBI Taxonomy" id="2022332"/>
    <lineage>
        <taxon>Eukaryota</taxon>
        <taxon>Viridiplantae</taxon>
        <taxon>Streptophyta</taxon>
        <taxon>Embryophyta</taxon>
        <taxon>Tracheophyta</taxon>
        <taxon>Spermatophyta</taxon>
        <taxon>Magnoliopsida</taxon>
        <taxon>eudicotyledons</taxon>
        <taxon>Gunneridae</taxon>
        <taxon>Pentapetalae</taxon>
        <taxon>asterids</taxon>
        <taxon>lamiids</taxon>
        <taxon>Gentianales</taxon>
        <taxon>Rubiaceae</taxon>
        <taxon>Rubioideae</taxon>
        <taxon>Psychotrieae</taxon>
        <taxon>Psychotria</taxon>
    </lineage>
</organism>
<dbReference type="SMR" id="C0HL29"/>
<dbReference type="GO" id="GO:0006952">
    <property type="term" value="P:defense response"/>
    <property type="evidence" value="ECO:0007669"/>
    <property type="project" value="UniProtKB-KW"/>
</dbReference>
<dbReference type="InterPro" id="IPR005535">
    <property type="entry name" value="Cyclotide"/>
</dbReference>
<dbReference type="InterPro" id="IPR012324">
    <property type="entry name" value="Cyclotide_moebius_CS"/>
</dbReference>
<dbReference type="InterPro" id="IPR036146">
    <property type="entry name" value="Cyclotide_sf"/>
</dbReference>
<dbReference type="Pfam" id="PF03784">
    <property type="entry name" value="Cyclotide"/>
    <property type="match status" value="1"/>
</dbReference>
<dbReference type="SUPFAM" id="SSF57038">
    <property type="entry name" value="Cyclotides"/>
    <property type="match status" value="1"/>
</dbReference>
<dbReference type="PROSITE" id="PS51052">
    <property type="entry name" value="CYCLOTIDE"/>
    <property type="match status" value="1"/>
</dbReference>
<dbReference type="PROSITE" id="PS60009">
    <property type="entry name" value="CYCLOTIDE_MOEBIUS"/>
    <property type="match status" value="1"/>
</dbReference>
<accession>C0HL29</accession>